<proteinExistence type="inferred from homology"/>
<organism>
    <name type="scientific">Photobacterium profundum (strain SS9)</name>
    <dbReference type="NCBI Taxonomy" id="298386"/>
    <lineage>
        <taxon>Bacteria</taxon>
        <taxon>Pseudomonadati</taxon>
        <taxon>Pseudomonadota</taxon>
        <taxon>Gammaproteobacteria</taxon>
        <taxon>Vibrionales</taxon>
        <taxon>Vibrionaceae</taxon>
        <taxon>Photobacterium</taxon>
    </lineage>
</organism>
<keyword id="KW-0004">4Fe-4S</keyword>
<keyword id="KW-0408">Iron</keyword>
<keyword id="KW-0411">Iron-sulfur</keyword>
<keyword id="KW-0414">Isoprene biosynthesis</keyword>
<keyword id="KW-0479">Metal-binding</keyword>
<keyword id="KW-0560">Oxidoreductase</keyword>
<keyword id="KW-1185">Reference proteome</keyword>
<feature type="chain" id="PRO_0000190611" description="4-hydroxy-3-methylbut-2-en-1-yl diphosphate synthase (flavodoxin)">
    <location>
        <begin position="1"/>
        <end position="373"/>
    </location>
</feature>
<feature type="binding site" evidence="1">
    <location>
        <position position="270"/>
    </location>
    <ligand>
        <name>[4Fe-4S] cluster</name>
        <dbReference type="ChEBI" id="CHEBI:49883"/>
    </ligand>
</feature>
<feature type="binding site" evidence="1">
    <location>
        <position position="273"/>
    </location>
    <ligand>
        <name>[4Fe-4S] cluster</name>
        <dbReference type="ChEBI" id="CHEBI:49883"/>
    </ligand>
</feature>
<feature type="binding site" evidence="1">
    <location>
        <position position="305"/>
    </location>
    <ligand>
        <name>[4Fe-4S] cluster</name>
        <dbReference type="ChEBI" id="CHEBI:49883"/>
    </ligand>
</feature>
<feature type="binding site" evidence="1">
    <location>
        <position position="312"/>
    </location>
    <ligand>
        <name>[4Fe-4S] cluster</name>
        <dbReference type="ChEBI" id="CHEBI:49883"/>
    </ligand>
</feature>
<name>ISPG_PHOPR</name>
<gene>
    <name evidence="1" type="primary">ispG</name>
    <name type="ordered locus">PBPRA0763</name>
</gene>
<accession>Q6LU49</accession>
<comment type="function">
    <text evidence="1">Converts 2C-methyl-D-erythritol 2,4-cyclodiphosphate (ME-2,4cPP) into 1-hydroxy-2-methyl-2-(E)-butenyl 4-diphosphate.</text>
</comment>
<comment type="catalytic activity">
    <reaction evidence="1">
        <text>(2E)-4-hydroxy-3-methylbut-2-enyl diphosphate + oxidized [flavodoxin] + H2O + 2 H(+) = 2-C-methyl-D-erythritol 2,4-cyclic diphosphate + reduced [flavodoxin]</text>
        <dbReference type="Rhea" id="RHEA:43604"/>
        <dbReference type="Rhea" id="RHEA-COMP:10622"/>
        <dbReference type="Rhea" id="RHEA-COMP:10623"/>
        <dbReference type="ChEBI" id="CHEBI:15377"/>
        <dbReference type="ChEBI" id="CHEBI:15378"/>
        <dbReference type="ChEBI" id="CHEBI:57618"/>
        <dbReference type="ChEBI" id="CHEBI:58210"/>
        <dbReference type="ChEBI" id="CHEBI:58483"/>
        <dbReference type="ChEBI" id="CHEBI:128753"/>
        <dbReference type="EC" id="1.17.7.3"/>
    </reaction>
</comment>
<comment type="cofactor">
    <cofactor evidence="1">
        <name>[4Fe-4S] cluster</name>
        <dbReference type="ChEBI" id="CHEBI:49883"/>
    </cofactor>
    <text evidence="1">Binds 1 [4Fe-4S] cluster.</text>
</comment>
<comment type="pathway">
    <text evidence="1">Isoprenoid biosynthesis; isopentenyl diphosphate biosynthesis via DXP pathway; isopentenyl diphosphate from 1-deoxy-D-xylulose 5-phosphate: step 5/6.</text>
</comment>
<comment type="similarity">
    <text evidence="1">Belongs to the IspG family.</text>
</comment>
<evidence type="ECO:0000255" key="1">
    <source>
        <dbReference type="HAMAP-Rule" id="MF_00159"/>
    </source>
</evidence>
<sequence length="373" mass="40805">MHSESPIIRRQSTRIYVGDVPIGDGAPIAVQSMTNTLTTDVAATVAQIRALEKVGADIVRVSVPTMDAAEAFKLIKQQVNIPLVADIHFDYRIALKVAEYGVDCLRINPGNIGNEERIRSVVECARDYNIPIRIGINGGSLEKEIQLKYGEPTPDALVESAMRHVDILDRLNFDQFKVSVKASDVFLAVESYRRLAKQIKQPLHLGITEAGGARAGSVKSAVGLGMLLAEGIGDTLRISLAADPVEEIKVGFDILKSLRIRSRGINFIACPTCSRQEFDVIGTVNELEQRLEDITTPMDVSIIGCVVNGPGEAEVSHLGVAGSSRKSAFYEDGIRQKERFDNDNVIDQLETKIRAKAAMLDVNNRINVQEVEK</sequence>
<protein>
    <recommendedName>
        <fullName evidence="1">4-hydroxy-3-methylbut-2-en-1-yl diphosphate synthase (flavodoxin)</fullName>
        <ecNumber evidence="1">1.17.7.3</ecNumber>
    </recommendedName>
    <alternativeName>
        <fullName evidence="1">1-hydroxy-2-methyl-2-(E)-butenyl 4-diphosphate synthase</fullName>
    </alternativeName>
</protein>
<dbReference type="EC" id="1.17.7.3" evidence="1"/>
<dbReference type="EMBL" id="CR378665">
    <property type="protein sequence ID" value="CAG19176.1"/>
    <property type="molecule type" value="Genomic_DNA"/>
</dbReference>
<dbReference type="RefSeq" id="WP_011217518.1">
    <property type="nucleotide sequence ID" value="NC_006370.1"/>
</dbReference>
<dbReference type="SMR" id="Q6LU49"/>
<dbReference type="STRING" id="298386.PBPRA0763"/>
<dbReference type="KEGG" id="ppr:PBPRA0763"/>
<dbReference type="eggNOG" id="COG0821">
    <property type="taxonomic scope" value="Bacteria"/>
</dbReference>
<dbReference type="HOGENOM" id="CLU_042258_0_0_6"/>
<dbReference type="UniPathway" id="UPA00056">
    <property type="reaction ID" value="UER00096"/>
</dbReference>
<dbReference type="Proteomes" id="UP000000593">
    <property type="component" value="Chromosome 1"/>
</dbReference>
<dbReference type="GO" id="GO:0051539">
    <property type="term" value="F:4 iron, 4 sulfur cluster binding"/>
    <property type="evidence" value="ECO:0007669"/>
    <property type="project" value="UniProtKB-UniRule"/>
</dbReference>
<dbReference type="GO" id="GO:0046429">
    <property type="term" value="F:4-hydroxy-3-methylbut-2-en-1-yl diphosphate synthase activity (ferredoxin)"/>
    <property type="evidence" value="ECO:0007669"/>
    <property type="project" value="UniProtKB-UniRule"/>
</dbReference>
<dbReference type="GO" id="GO:0141197">
    <property type="term" value="F:4-hydroxy-3-methylbut-2-enyl-diphosphate synthase activity (flavodoxin)"/>
    <property type="evidence" value="ECO:0007669"/>
    <property type="project" value="UniProtKB-EC"/>
</dbReference>
<dbReference type="GO" id="GO:0005506">
    <property type="term" value="F:iron ion binding"/>
    <property type="evidence" value="ECO:0007669"/>
    <property type="project" value="InterPro"/>
</dbReference>
<dbReference type="GO" id="GO:0019288">
    <property type="term" value="P:isopentenyl diphosphate biosynthetic process, methylerythritol 4-phosphate pathway"/>
    <property type="evidence" value="ECO:0007669"/>
    <property type="project" value="UniProtKB-UniRule"/>
</dbReference>
<dbReference type="GO" id="GO:0016114">
    <property type="term" value="P:terpenoid biosynthetic process"/>
    <property type="evidence" value="ECO:0007669"/>
    <property type="project" value="InterPro"/>
</dbReference>
<dbReference type="FunFam" id="3.20.20.20:FF:000001">
    <property type="entry name" value="4-hydroxy-3-methylbut-2-en-1-yl diphosphate synthase (flavodoxin)"/>
    <property type="match status" value="1"/>
</dbReference>
<dbReference type="FunFam" id="3.30.413.10:FF:000002">
    <property type="entry name" value="4-hydroxy-3-methylbut-2-en-1-yl diphosphate synthase (flavodoxin)"/>
    <property type="match status" value="1"/>
</dbReference>
<dbReference type="Gene3D" id="3.20.20.20">
    <property type="entry name" value="Dihydropteroate synthase-like"/>
    <property type="match status" value="1"/>
</dbReference>
<dbReference type="Gene3D" id="3.30.413.10">
    <property type="entry name" value="Sulfite Reductase Hemoprotein, domain 1"/>
    <property type="match status" value="1"/>
</dbReference>
<dbReference type="HAMAP" id="MF_00159">
    <property type="entry name" value="IspG"/>
    <property type="match status" value="1"/>
</dbReference>
<dbReference type="InterPro" id="IPR011005">
    <property type="entry name" value="Dihydropteroate_synth-like_sf"/>
</dbReference>
<dbReference type="InterPro" id="IPR016425">
    <property type="entry name" value="IspG_bac"/>
</dbReference>
<dbReference type="InterPro" id="IPR004588">
    <property type="entry name" value="IspG_bac-typ"/>
</dbReference>
<dbReference type="InterPro" id="IPR045854">
    <property type="entry name" value="NO2/SO3_Rdtase_4Fe4S_sf"/>
</dbReference>
<dbReference type="NCBIfam" id="TIGR00612">
    <property type="entry name" value="ispG_gcpE"/>
    <property type="match status" value="1"/>
</dbReference>
<dbReference type="NCBIfam" id="NF001540">
    <property type="entry name" value="PRK00366.1"/>
    <property type="match status" value="1"/>
</dbReference>
<dbReference type="PANTHER" id="PTHR30454">
    <property type="entry name" value="4-HYDROXY-3-METHYLBUT-2-EN-1-YL DIPHOSPHATE SYNTHASE"/>
    <property type="match status" value="1"/>
</dbReference>
<dbReference type="PANTHER" id="PTHR30454:SF0">
    <property type="entry name" value="4-HYDROXY-3-METHYLBUT-2-EN-1-YL DIPHOSPHATE SYNTHASE (FERREDOXIN), CHLOROPLASTIC"/>
    <property type="match status" value="1"/>
</dbReference>
<dbReference type="Pfam" id="PF04551">
    <property type="entry name" value="GcpE"/>
    <property type="match status" value="1"/>
</dbReference>
<dbReference type="PIRSF" id="PIRSF004640">
    <property type="entry name" value="IspG"/>
    <property type="match status" value="1"/>
</dbReference>
<dbReference type="SUPFAM" id="SSF51717">
    <property type="entry name" value="Dihydropteroate synthetase-like"/>
    <property type="match status" value="1"/>
</dbReference>
<dbReference type="SUPFAM" id="SSF56014">
    <property type="entry name" value="Nitrite and sulphite reductase 4Fe-4S domain-like"/>
    <property type="match status" value="1"/>
</dbReference>
<reference key="1">
    <citation type="journal article" date="2005" name="Science">
        <title>Life at depth: Photobacterium profundum genome sequence and expression analysis.</title>
        <authorList>
            <person name="Vezzi A."/>
            <person name="Campanaro S."/>
            <person name="D'Angelo M."/>
            <person name="Simonato F."/>
            <person name="Vitulo N."/>
            <person name="Lauro F.M."/>
            <person name="Cestaro A."/>
            <person name="Malacrida G."/>
            <person name="Simionati B."/>
            <person name="Cannata N."/>
            <person name="Romualdi C."/>
            <person name="Bartlett D.H."/>
            <person name="Valle G."/>
        </authorList>
    </citation>
    <scope>NUCLEOTIDE SEQUENCE [LARGE SCALE GENOMIC DNA]</scope>
    <source>
        <strain>ATCC BAA-1253 / SS9</strain>
    </source>
</reference>